<dbReference type="EC" id="2.3.2.23"/>
<dbReference type="EMBL" id="AE016814">
    <property type="protein sequence ID" value="AAS50523.1"/>
    <property type="molecule type" value="Genomic_DNA"/>
</dbReference>
<dbReference type="RefSeq" id="NP_982699.1">
    <property type="nucleotide sequence ID" value="NM_208052.1"/>
</dbReference>
<dbReference type="SMR" id="Q75EB8"/>
<dbReference type="FunCoup" id="Q75EB8">
    <property type="interactions" value="851"/>
</dbReference>
<dbReference type="STRING" id="284811.Q75EB8"/>
<dbReference type="EnsemblFungi" id="AAS50523">
    <property type="protein sequence ID" value="AAS50523"/>
    <property type="gene ID" value="AGOS_AAR156C"/>
</dbReference>
<dbReference type="GeneID" id="4618613"/>
<dbReference type="KEGG" id="ago:AGOS_AAR156C"/>
<dbReference type="eggNOG" id="KOG0419">
    <property type="taxonomic scope" value="Eukaryota"/>
</dbReference>
<dbReference type="HOGENOM" id="CLU_030988_10_2_1"/>
<dbReference type="InParanoid" id="Q75EB8"/>
<dbReference type="OMA" id="DHKSQYI"/>
<dbReference type="OrthoDB" id="9984419at2759"/>
<dbReference type="UniPathway" id="UPA00143"/>
<dbReference type="Proteomes" id="UP000000591">
    <property type="component" value="Chromosome I"/>
</dbReference>
<dbReference type="GO" id="GO:0000781">
    <property type="term" value="C:chromosome, telomeric region"/>
    <property type="evidence" value="ECO:0007669"/>
    <property type="project" value="GOC"/>
</dbReference>
<dbReference type="GO" id="GO:0005737">
    <property type="term" value="C:cytoplasm"/>
    <property type="evidence" value="ECO:0007669"/>
    <property type="project" value="UniProtKB-SubCell"/>
</dbReference>
<dbReference type="GO" id="GO:0033503">
    <property type="term" value="C:HULC complex"/>
    <property type="evidence" value="ECO:0000318"/>
    <property type="project" value="GO_Central"/>
</dbReference>
<dbReference type="GO" id="GO:1990304">
    <property type="term" value="C:MUB1-RAD6-UBR2 ubiquitin ligase complex"/>
    <property type="evidence" value="ECO:0007669"/>
    <property type="project" value="EnsemblFungi"/>
</dbReference>
<dbReference type="GO" id="GO:0005634">
    <property type="term" value="C:nucleus"/>
    <property type="evidence" value="ECO:0007669"/>
    <property type="project" value="UniProtKB-SubCell"/>
</dbReference>
<dbReference type="GO" id="GO:0097505">
    <property type="term" value="C:Rad6-Rad18 complex"/>
    <property type="evidence" value="ECO:0007669"/>
    <property type="project" value="EnsemblFungi"/>
</dbReference>
<dbReference type="GO" id="GO:1990305">
    <property type="term" value="C:RAD6-UBR2 ubiquitin ligase complex"/>
    <property type="evidence" value="ECO:0007669"/>
    <property type="project" value="EnsemblFungi"/>
</dbReference>
<dbReference type="GO" id="GO:1990303">
    <property type="term" value="C:UBR1-RAD6 ubiquitin ligase complex"/>
    <property type="evidence" value="ECO:0007669"/>
    <property type="project" value="EnsemblFungi"/>
</dbReference>
<dbReference type="GO" id="GO:0005524">
    <property type="term" value="F:ATP binding"/>
    <property type="evidence" value="ECO:0007669"/>
    <property type="project" value="UniProtKB-KW"/>
</dbReference>
<dbReference type="GO" id="GO:0070628">
    <property type="term" value="F:proteasome binding"/>
    <property type="evidence" value="ECO:0007669"/>
    <property type="project" value="EnsemblFungi"/>
</dbReference>
<dbReference type="GO" id="GO:0003697">
    <property type="term" value="F:single-stranded DNA binding"/>
    <property type="evidence" value="ECO:0007669"/>
    <property type="project" value="EnsemblFungi"/>
</dbReference>
<dbReference type="GO" id="GO:0017116">
    <property type="term" value="F:single-stranded DNA helicase activity"/>
    <property type="evidence" value="ECO:0007669"/>
    <property type="project" value="EnsemblFungi"/>
</dbReference>
<dbReference type="GO" id="GO:0061631">
    <property type="term" value="F:ubiquitin conjugating enzyme activity"/>
    <property type="evidence" value="ECO:0000318"/>
    <property type="project" value="GO_Central"/>
</dbReference>
<dbReference type="GO" id="GO:0034620">
    <property type="term" value="P:cellular response to unfolded protein"/>
    <property type="evidence" value="ECO:0007669"/>
    <property type="project" value="EnsemblFungi"/>
</dbReference>
<dbReference type="GO" id="GO:0071629">
    <property type="term" value="P:cytoplasm protein quality control by the ubiquitin-proteasome system"/>
    <property type="evidence" value="ECO:0007669"/>
    <property type="project" value="EnsemblFungi"/>
</dbReference>
<dbReference type="GO" id="GO:0006281">
    <property type="term" value="P:DNA repair"/>
    <property type="evidence" value="ECO:0000318"/>
    <property type="project" value="GO_Central"/>
</dbReference>
<dbReference type="GO" id="GO:0006353">
    <property type="term" value="P:DNA-templated transcription termination"/>
    <property type="evidence" value="ECO:0007669"/>
    <property type="project" value="EnsemblFungi"/>
</dbReference>
<dbReference type="GO" id="GO:0000724">
    <property type="term" value="P:double-strand break repair via homologous recombination"/>
    <property type="evidence" value="ECO:0007669"/>
    <property type="project" value="EnsemblFungi"/>
</dbReference>
<dbReference type="GO" id="GO:0036503">
    <property type="term" value="P:ERAD pathway"/>
    <property type="evidence" value="ECO:0007669"/>
    <property type="project" value="EnsemblFungi"/>
</dbReference>
<dbReference type="GO" id="GO:0042275">
    <property type="term" value="P:error-free postreplication DNA repair"/>
    <property type="evidence" value="ECO:0007669"/>
    <property type="project" value="EnsemblFungi"/>
</dbReference>
<dbReference type="GO" id="GO:0070987">
    <property type="term" value="P:error-free translesion synthesis"/>
    <property type="evidence" value="ECO:0007669"/>
    <property type="project" value="EnsemblFungi"/>
</dbReference>
<dbReference type="GO" id="GO:0042276">
    <property type="term" value="P:error-prone translesion synthesis"/>
    <property type="evidence" value="ECO:0007669"/>
    <property type="project" value="EnsemblFungi"/>
</dbReference>
<dbReference type="GO" id="GO:0042138">
    <property type="term" value="P:meiotic DNA double-strand break formation"/>
    <property type="evidence" value="ECO:0007669"/>
    <property type="project" value="EnsemblFungi"/>
</dbReference>
<dbReference type="GO" id="GO:0031571">
    <property type="term" value="P:mitotic G1 DNA damage checkpoint signaling"/>
    <property type="evidence" value="ECO:0007669"/>
    <property type="project" value="EnsemblFungi"/>
</dbReference>
<dbReference type="GO" id="GO:2000639">
    <property type="term" value="P:negative regulation of SREBP signaling pathway"/>
    <property type="evidence" value="ECO:0007669"/>
    <property type="project" value="EnsemblFungi"/>
</dbReference>
<dbReference type="GO" id="GO:0043161">
    <property type="term" value="P:proteasome-mediated ubiquitin-dependent protein catabolic process"/>
    <property type="evidence" value="ECO:0000318"/>
    <property type="project" value="GO_Central"/>
</dbReference>
<dbReference type="GO" id="GO:0000209">
    <property type="term" value="P:protein polyubiquitination"/>
    <property type="evidence" value="ECO:0000318"/>
    <property type="project" value="GO_Central"/>
</dbReference>
<dbReference type="GO" id="GO:0090089">
    <property type="term" value="P:regulation of dipeptide transport"/>
    <property type="evidence" value="ECO:0007669"/>
    <property type="project" value="EnsemblFungi"/>
</dbReference>
<dbReference type="GO" id="GO:0009302">
    <property type="term" value="P:sno(s)RNA transcription"/>
    <property type="evidence" value="ECO:0007669"/>
    <property type="project" value="EnsemblFungi"/>
</dbReference>
<dbReference type="GO" id="GO:0030435">
    <property type="term" value="P:sporulation resulting in formation of a cellular spore"/>
    <property type="evidence" value="ECO:0007669"/>
    <property type="project" value="UniProtKB-KW"/>
</dbReference>
<dbReference type="GO" id="GO:0120174">
    <property type="term" value="P:stress-induced homeostatically regulated protein degradation pathway"/>
    <property type="evidence" value="ECO:0007669"/>
    <property type="project" value="EnsemblFungi"/>
</dbReference>
<dbReference type="GO" id="GO:0031509">
    <property type="term" value="P:subtelomeric heterochromatin formation"/>
    <property type="evidence" value="ECO:0007669"/>
    <property type="project" value="EnsemblFungi"/>
</dbReference>
<dbReference type="GO" id="GO:0000722">
    <property type="term" value="P:telomere maintenance via recombination"/>
    <property type="evidence" value="ECO:0007669"/>
    <property type="project" value="EnsemblFungi"/>
</dbReference>
<dbReference type="GO" id="GO:0006366">
    <property type="term" value="P:transcription by RNA polymerase II"/>
    <property type="evidence" value="ECO:0007669"/>
    <property type="project" value="EnsemblFungi"/>
</dbReference>
<dbReference type="GO" id="GO:0071596">
    <property type="term" value="P:ubiquitin-dependent protein catabolic process via the N-end rule pathway"/>
    <property type="evidence" value="ECO:0007669"/>
    <property type="project" value="EnsemblFungi"/>
</dbReference>
<dbReference type="CDD" id="cd23790">
    <property type="entry name" value="UBCc_UBE2A_2B"/>
    <property type="match status" value="1"/>
</dbReference>
<dbReference type="FunFam" id="3.10.110.10:FF:000007">
    <property type="entry name" value="Ubiquitin-conjugating enzyme E2 2"/>
    <property type="match status" value="1"/>
</dbReference>
<dbReference type="Gene3D" id="3.10.110.10">
    <property type="entry name" value="Ubiquitin Conjugating Enzyme"/>
    <property type="match status" value="1"/>
</dbReference>
<dbReference type="InterPro" id="IPR050113">
    <property type="entry name" value="Ub_conjugating_enzyme"/>
</dbReference>
<dbReference type="InterPro" id="IPR000608">
    <property type="entry name" value="UBQ-conjugat_E2_core"/>
</dbReference>
<dbReference type="InterPro" id="IPR023313">
    <property type="entry name" value="UBQ-conjugating_AS"/>
</dbReference>
<dbReference type="InterPro" id="IPR016135">
    <property type="entry name" value="UBQ-conjugating_enzyme/RWD"/>
</dbReference>
<dbReference type="PANTHER" id="PTHR24067">
    <property type="entry name" value="UBIQUITIN-CONJUGATING ENZYME E2"/>
    <property type="match status" value="1"/>
</dbReference>
<dbReference type="Pfam" id="PF00179">
    <property type="entry name" value="UQ_con"/>
    <property type="match status" value="1"/>
</dbReference>
<dbReference type="SMART" id="SM00212">
    <property type="entry name" value="UBCc"/>
    <property type="match status" value="1"/>
</dbReference>
<dbReference type="SUPFAM" id="SSF54495">
    <property type="entry name" value="UBC-like"/>
    <property type="match status" value="1"/>
</dbReference>
<dbReference type="PROSITE" id="PS00183">
    <property type="entry name" value="UBC_1"/>
    <property type="match status" value="1"/>
</dbReference>
<dbReference type="PROSITE" id="PS50127">
    <property type="entry name" value="UBC_2"/>
    <property type="match status" value="1"/>
</dbReference>
<feature type="chain" id="PRO_0000082526" description="Ubiquitin-conjugating enzyme E2 2">
    <location>
        <begin position="1"/>
        <end position="170"/>
    </location>
</feature>
<feature type="domain" description="UBC core" evidence="2">
    <location>
        <begin position="4"/>
        <end position="150"/>
    </location>
</feature>
<feature type="region of interest" description="Disordered" evidence="4">
    <location>
        <begin position="148"/>
        <end position="170"/>
    </location>
</feature>
<feature type="compositionally biased region" description="Acidic residues" evidence="4">
    <location>
        <begin position="152"/>
        <end position="170"/>
    </location>
</feature>
<feature type="active site" description="Glycyl thioester intermediate" evidence="2 3">
    <location>
        <position position="88"/>
    </location>
</feature>
<reference key="1">
    <citation type="journal article" date="2004" name="Science">
        <title>The Ashbya gossypii genome as a tool for mapping the ancient Saccharomyces cerevisiae genome.</title>
        <authorList>
            <person name="Dietrich F.S."/>
            <person name="Voegeli S."/>
            <person name="Brachat S."/>
            <person name="Lerch A."/>
            <person name="Gates K."/>
            <person name="Steiner S."/>
            <person name="Mohr C."/>
            <person name="Poehlmann R."/>
            <person name="Luedi P."/>
            <person name="Choi S."/>
            <person name="Wing R.A."/>
            <person name="Flavier A."/>
            <person name="Gaffney T.D."/>
            <person name="Philippsen P."/>
        </authorList>
    </citation>
    <scope>NUCLEOTIDE SEQUENCE [LARGE SCALE GENOMIC DNA]</scope>
    <source>
        <strain>ATCC 10895 / CBS 109.51 / FGSC 9923 / NRRL Y-1056</strain>
    </source>
</reference>
<reference key="2">
    <citation type="journal article" date="2013" name="G3 (Bethesda)">
        <title>Genomes of Ashbya fungi isolated from insects reveal four mating-type loci, numerous translocations, lack of transposons, and distinct gene duplications.</title>
        <authorList>
            <person name="Dietrich F.S."/>
            <person name="Voegeli S."/>
            <person name="Kuo S."/>
            <person name="Philippsen P."/>
        </authorList>
    </citation>
    <scope>GENOME REANNOTATION</scope>
    <source>
        <strain>ATCC 10895 / CBS 109.51 / FGSC 9923 / NRRL Y-1056</strain>
    </source>
</reference>
<keyword id="KW-0067">ATP-binding</keyword>
<keyword id="KW-0156">Chromatin regulator</keyword>
<keyword id="KW-0963">Cytoplasm</keyword>
<keyword id="KW-0227">DNA damage</keyword>
<keyword id="KW-0234">DNA repair</keyword>
<keyword id="KW-0547">Nucleotide-binding</keyword>
<keyword id="KW-0539">Nucleus</keyword>
<keyword id="KW-1185">Reference proteome</keyword>
<keyword id="KW-0749">Sporulation</keyword>
<keyword id="KW-0804">Transcription</keyword>
<keyword id="KW-0805">Transcription regulation</keyword>
<keyword id="KW-0808">Transferase</keyword>
<keyword id="KW-0833">Ubl conjugation pathway</keyword>
<proteinExistence type="inferred from homology"/>
<accession>Q75EB8</accession>
<comment type="function">
    <text evidence="2">Catalyzes the covalent attachment of ubiquitin to other proteins. Plays a role in transcription regulation by catalyzing the monoubiquitination of histone H2B to form H2BK123ub1. H2BK123ub1 gives a specific tag for epigenetic transcriptional activation and is also a prerequisite for H3K4me and H3K79me formation. Also involved in postreplication repair of UV-damaged DNA, in N-end rule-dependent protein degradation and in sporulation.</text>
</comment>
<comment type="catalytic activity">
    <reaction evidence="2 3">
        <text>S-ubiquitinyl-[E1 ubiquitin-activating enzyme]-L-cysteine + [E2 ubiquitin-conjugating enzyme]-L-cysteine = [E1 ubiquitin-activating enzyme]-L-cysteine + S-ubiquitinyl-[E2 ubiquitin-conjugating enzyme]-L-cysteine.</text>
        <dbReference type="EC" id="2.3.2.23"/>
    </reaction>
</comment>
<comment type="pathway">
    <text evidence="2">Protein modification; protein ubiquitination.</text>
</comment>
<comment type="subcellular location">
    <subcellularLocation>
        <location evidence="1">Cytoplasm</location>
    </subcellularLocation>
    <subcellularLocation>
        <location evidence="1">Nucleus</location>
    </subcellularLocation>
</comment>
<comment type="similarity">
    <text evidence="2">Belongs to the ubiquitin-conjugating enzyme family.</text>
</comment>
<evidence type="ECO:0000250" key="1">
    <source>
        <dbReference type="UniProtKB" id="Q5VVX9"/>
    </source>
</evidence>
<evidence type="ECO:0000255" key="2">
    <source>
        <dbReference type="PROSITE-ProRule" id="PRU00388"/>
    </source>
</evidence>
<evidence type="ECO:0000255" key="3">
    <source>
        <dbReference type="PROSITE-ProRule" id="PRU10133"/>
    </source>
</evidence>
<evidence type="ECO:0000256" key="4">
    <source>
        <dbReference type="SAM" id="MobiDB-lite"/>
    </source>
</evidence>
<organism>
    <name type="scientific">Eremothecium gossypii (strain ATCC 10895 / CBS 109.51 / FGSC 9923 / NRRL Y-1056)</name>
    <name type="common">Yeast</name>
    <name type="synonym">Ashbya gossypii</name>
    <dbReference type="NCBI Taxonomy" id="284811"/>
    <lineage>
        <taxon>Eukaryota</taxon>
        <taxon>Fungi</taxon>
        <taxon>Dikarya</taxon>
        <taxon>Ascomycota</taxon>
        <taxon>Saccharomycotina</taxon>
        <taxon>Saccharomycetes</taxon>
        <taxon>Saccharomycetales</taxon>
        <taxon>Saccharomycetaceae</taxon>
        <taxon>Eremothecium</taxon>
    </lineage>
</organism>
<name>UBC2_EREGS</name>
<gene>
    <name type="primary">UBC2</name>
    <name type="ordered locus">AAR156C</name>
</gene>
<protein>
    <recommendedName>
        <fullName>Ubiquitin-conjugating enzyme E2 2</fullName>
        <ecNumber>2.3.2.23</ecNumber>
    </recommendedName>
    <alternativeName>
        <fullName>E2 ubiquitin-conjugating enzyme 2</fullName>
    </alternativeName>
    <alternativeName>
        <fullName>Ubiquitin carrier protein UBC2</fullName>
    </alternativeName>
    <alternativeName>
        <fullName>Ubiquitin-protein ligase UBC2</fullName>
    </alternativeName>
</protein>
<sequence length="170" mass="19443">MSTPARRRLMRDFKRMKEDAPPGVSASPLPDNVMVWNAMIIGPADTPYEDGTFRLLLEFDEEYPNKPPHVKFLSEMFHPNVYANGEICLDILQNRWTPTYDVASILTSIQSLFNDPNPASPANVEAATLFKDHKSQYVKRVKETVEKSWEDDLKDMDDGDDDDDDDDDDD</sequence>